<proteinExistence type="evidence at protein level"/>
<keyword id="KW-0130">Cell adhesion</keyword>
<keyword id="KW-0998">Cell outer membrane</keyword>
<keyword id="KW-0472">Membrane</keyword>
<keyword id="KW-0732">Signal</keyword>
<keyword id="KW-0812">Transmembrane</keyword>
<keyword id="KW-1134">Transmembrane beta strand</keyword>
<keyword id="KW-0843">Virulence</keyword>
<sequence>MPNLANQDFTQFKREQQTAPAWFRILRGGRMTKWKGKVASYAPHVAPAIGWAFSRTLQLSLISLVMAGTAAASDRYWDSNGTAVGRGGSGAWNTSNAFWSPSGDGVSGPYSAWNNAAFDTAIFGGTAGTVTLGSPITVGAMTFETTGYILSGNTLTLGTATPTITTSSGTTTINSVLAGTNGLTKAGDGILSLTGANTFSGNIIVTGGTLSVNSSAALGAAANEISLANGAGLNSSGSLAGRSVTLTGGQAAIGGAGVGDAHFTGAGGLRASSSVTLSDDSNDYTGQTSLSSGGTLFFSSIGNLGEVSALGAPVDEAAGTISLVVGSSASASATYTGSGASSNRNWQLSSRFYANSTISNRGSGTLTLTGNIFNNHTNSSLSARNINFDAGTADIELLGTISSNNNGVGVVFGGTAGRTIKVSGDNTFGGAAIIQNITVQVGSLKNTGDPSALGTGTGAAGAISINSGILSYLGAGDSSDRNFTAQNNAILANDGTGALTLSGDVALTGTLTLGGSFAGTNTLAGTVSGTGNLRVDGAGSWILSSANTFTGDVGVNSGTLVVGNMQALGTTPKAATVNGGTLDLGAFDTTLSSLSGTGGNVNLGGATLTVKGSTSTDFAGSMTGSGNLLKQGTSTLTLTGASSFTGDTTINGGAISLNFKNATALTDNILSTSSTLNLAGGTFNVIGMDNAANSQTVDGLNVTTGNNKITTTSGSGGTLTLNLGAINRTGGFIDFGINADTTITTTSATLGGWATVNSTDYAKVDGGVIKALDESDYANKDDAGTWANGDIVSDAGGAANTPYFGTVGTGLQLGGLKYTAAANSTVTIAAGQTLGVNGTIIVANTVGNTNQTINGGSLTGITGGGVLGVLQTGTGTFTIQSTITDNGGAIGFTKAGAGSVTLTGQNTYSGVTTLSGGILTVTQMANAGMASGIGQSTADPANLMLESGTFRYTGGSVTTDRGFTLVNGGPARVIEVTGSGSNLAFSGLVTSPDDAGFEKKGAGTLTFLNGSNDYIGATTVSGGTLAVSTLADGGQVSSLGKSGSDATNLILAGGALNYLGSTTSSDRSFTLGAGNGSIGVANAGTTLSMSGTAVGTGGLTKLGDGTLILSGTNTYTGNTAVNAGVLRAGSAQAFGPSGLMTVGNGASLELGGYDITVSGLLGAGTVDLGGNTLTSSGSAANSFTGKITGTGGFTRTGGSTQTLSGCNSDYTGKTTIASNGTLSVDCLKNGGQASSIGASSNAPDNLVLNNGTLSYTGNTVTTDRGFTIQGGTGAISVTDAATTLTFSGQVVGTGALQKRGTGTLVLMNSNSYRGGTSVDAGTLRAGSSGAFGGGSMSLSNAAGAILDLDGFDTSVTSLSGGGALGGNVALGGATLTISSGNSNGTSYTGAITGIGNFVKNGNGTQRLTGCASSYSGSTTINGGVLEDSCLADGGSVSSIGMSSADADNLVINGGVLRYTGSGDSTDRQFTLGASGGNSIESEGTGAILFTSNAAVTFAAANTAQTLTLAGTNTDDNELGAQLTNNGSGITSLTKTDTGTWFLTNSDSTYTGVTKINGGVLSVDKLANGGLASSIGASSSAASNLIIGNDSTLRYLGTGDTTDRLFTLASGLTYIESSGSGAIVFTDTGQVALADNNQARTIALGGKNTGDNTLAGSIGDAGTGKTTLAKNDDGTWVLTGNNTFTGPTNINKGLLKIGNGGTTGSLTSDIVVTDGGLIFNRSDTLNYGGLISGAGFVTQSGSGTTILTGANSYTGATSVSAGTLLVNGDQSAATGQTSVANGSILGGSGIIGGNVVVTDGALAPGSNGAGTLTINGSLALSAGSILSMQLGQAGVAGGALNDLIEVKGNLTLDGTLDVAETAGGSYGPGIYRLINYTGSLTDNGLDIGMLPNGAGAIQTAVAGQVNLLAGGTNFNFWDGDVGPKFNSAVDGGNGTWQNSSGNNNWTDATGNINASYSDGAFAIFTGTAGTVTIDNSLGQVKAEGMQFAIDSYAVTGDKLELTGPQSTIRVGDGTTAGAAYIATINSVLTGNTQLEKTDAGTLVLTGANSYTGGTAINGGTIRISSDDNLGVASSDISFDGGALNTTANIATDRAIILTGAGTLLTDASTTLSLSGPISGTGALTKSGTGTLLLSGTAVHTGGTTITAGTLQIGNGGTDGSIDGNIVNNGALVFDRAGTLAYTGSISGTGTLTKNGSSTLTMTGTSTYTGETTVSAGTLALQAGGQIKGTASLTVDGGAEVLIDGSGSQFATGAGASVVGTGTVTVRDGGTASFDSLTTSNATGTNSTITVAGSGSQMTQTGIATFGLAGTATVDILDGGTMISSGASVFVGGQLPMDATGQVTISGAGSQWTIANALYARRGSITVDDGGVVTAGSAVIGYADTGINNPETDLVVTGAGSRFETTGELAITNSAANAARGSITIADGGVVKVGGGALAMGPGNAVLNIGAAAGGSPAHAGTLDAGTVTMAVGSNQINFNHDDASTTFSATISGAGSVSQNGPGATLLTGNNSYAGLTTVTAGSLYIDGDQSMATGLTTVNPGGTLGGTGTIGGDVTVASGGAINPGSFGMAPGTLNINGDLTLASGSTQSFSFGQANIPGGPLNDLINVGGDLVLAGTLQVDTSAGGTMDPGIYRVFNYTGTLSQNAWTVNLPSPDFYVQTSVAQQINLVNTAGLALRFWDGADPQNKNNGKIEGGNGIWQAFGSAPDNGNDNWTETGNINAPFQDATFAVFTGEKGTVTVDDSKGAINVSGIQFVTDGYIVNGDAINLVGASGSTIRVGDGTTGGTDTVASIDAEITGASQLIKADMGTLILTGDNSYTGGTKITGGTLQVAKDSALGARTGELILDGGTLNTTADMTIDRSVTVDQAGTLDIDTGTTLKIDGVLSGAGAFVKTGAGRLELAGDDHTYNGDASIASGTLALTGALGGTMNVGIDGRLEATGRVGATTNSGVIALDQEGFGSLTVNGNYTGKDGRLEIATVLGDDTSLTNRLVIDGDMAGTTQVSVTNRGGLGAQTVEGIKIIQVGGASNGMFLLAGDYMFNGEQAVVAGAYGYRLYKGGVSTPADGNWYLRSALLNPETPTNPTDPETPLYQPGVPLYESYAGSLQQLNKLGTLQQRVGNRVWAKHPVPAQSDENGAGPSGNNGIWARIEAAHAEFDPKQSTSRASYDADIWKFQTGIDGMFAETASGKFIGGVYVQYETVSSSVSSPFGNGSIESSGYGAGATLTWYGESDFYIDGVAQINWFDSDLNSATLGRQLVDGNRAVGYSLSVETGQKIEIGEGWSLTPQAQLAYSAIRFDDFKDAFDTSVSPENDHDLTGRLGLAINRDAEWLDAQGRRVAMHIYGIGNLYYGFAGASKVDVSSVRFVSGNERLRGGIGLGGTYDWADSKYSLYGETRFDTSLQNFGDSNVIAGSVGLRVRW</sequence>
<evidence type="ECO:0000250" key="1">
    <source>
        <dbReference type="UniProtKB" id="Q45340"/>
    </source>
</evidence>
<evidence type="ECO:0000255" key="2">
    <source>
        <dbReference type="PROSITE-ProRule" id="PRU00556"/>
    </source>
</evidence>
<evidence type="ECO:0000269" key="3">
    <source>
    </source>
</evidence>
<evidence type="ECO:0000303" key="4">
    <source>
    </source>
</evidence>
<evidence type="ECO:0000305" key="5"/>
<evidence type="ECO:0000305" key="6">
    <source>
    </source>
</evidence>
<evidence type="ECO:0000312" key="7">
    <source>
        <dbReference type="EMBL" id="AAN34307.1"/>
    </source>
</evidence>
<evidence type="ECO:0000312" key="8">
    <source>
        <dbReference type="EMBL" id="AEM20583.1"/>
    </source>
</evidence>
<comment type="function">
    <text evidence="3">Fibronectin-binding protein, which is involved in adhesion to host cells and in the infective process. Mediates the binding of B.suis to the extracellular matrix and to non-phagocytic cells via cell-associated fibronectin.</text>
</comment>
<comment type="subcellular location">
    <subcellularLocation>
        <location evidence="3">Cell surface</location>
    </subcellularLocation>
    <subcellularLocation>
        <location evidence="5">Cell outer membrane</location>
        <topology evidence="5">Multi-pass membrane protein</topology>
    </subcellularLocation>
    <text evidence="3 5">Localizes at one cell pole (PubMed:22321605). The C-terminal autotransporter region is probably inserted into the outer membrane (Probable).</text>
</comment>
<comment type="domain">
    <text evidence="1">The signal peptide, cleaved at the inner membrane, guides the autotransporter protein to the periplasmic space. Then, insertion of the C-terminal translocator domain in the outer membrane forms a hydrophilic pore for the translocation of the passenger domain to the bacterial cell surface.</text>
</comment>
<comment type="disruption phenotype">
    <text evidence="3">Deletion mutant is impaired in the adhesion of B.suis to immobilized fibronectin and host cells.</text>
</comment>
<name>BMAC_BRUSU</name>
<gene>
    <name evidence="4" type="primary">bmaC</name>
    <name evidence="7" type="ordered locus">BRA1148</name>
    <name evidence="8" type="ordered locus">BS1330_II1139</name>
</gene>
<feature type="signal peptide" evidence="6">
    <location>
        <begin position="1"/>
        <end position="72"/>
    </location>
</feature>
<feature type="chain" id="PRO_0000438295" description="Adhesin BmaC autotransporter">
    <location>
        <begin position="73"/>
        <end position="3420"/>
    </location>
</feature>
<feature type="domain" description="Autotransporter" evidence="2">
    <location>
        <begin position="3138"/>
        <end position="3420"/>
    </location>
</feature>
<reference key="1">
    <citation type="journal article" date="2002" name="Proc. Natl. Acad. Sci. U.S.A.">
        <title>The Brucella suis genome reveals fundamental similarities between animal and plant pathogens and symbionts.</title>
        <authorList>
            <person name="Paulsen I.T."/>
            <person name="Seshadri R."/>
            <person name="Nelson K.E."/>
            <person name="Eisen J.A."/>
            <person name="Heidelberg J.F."/>
            <person name="Read T.D."/>
            <person name="Dodson R.J."/>
            <person name="Umayam L.A."/>
            <person name="Brinkac L.M."/>
            <person name="Beanan M.J."/>
            <person name="Daugherty S.C."/>
            <person name="DeBoy R.T."/>
            <person name="Durkin A.S."/>
            <person name="Kolonay J.F."/>
            <person name="Madupu R."/>
            <person name="Nelson W.C."/>
            <person name="Ayodeji B."/>
            <person name="Kraul M."/>
            <person name="Shetty J."/>
            <person name="Malek J.A."/>
            <person name="Van Aken S.E."/>
            <person name="Riedmuller S."/>
            <person name="Tettelin H."/>
            <person name="Gill S.R."/>
            <person name="White O."/>
            <person name="Salzberg S.L."/>
            <person name="Hoover D.L."/>
            <person name="Lindler L.E."/>
            <person name="Halling S.M."/>
            <person name="Boyle S.M."/>
            <person name="Fraser C.M."/>
        </authorList>
    </citation>
    <scope>NUCLEOTIDE SEQUENCE [LARGE SCALE GENOMIC DNA]</scope>
    <source>
        <strain>1330</strain>
    </source>
</reference>
<reference key="2">
    <citation type="journal article" date="2011" name="J. Bacteriol.">
        <title>Revised genome sequence of Brucella suis 1330.</title>
        <authorList>
            <person name="Tae H."/>
            <person name="Shallom S."/>
            <person name="Settlage R."/>
            <person name="Preston D."/>
            <person name="Adams L.G."/>
            <person name="Garner H.R."/>
        </authorList>
    </citation>
    <scope>NUCLEOTIDE SEQUENCE [LARGE SCALE GENOMIC DNA]</scope>
    <source>
        <strain>1330</strain>
    </source>
</reference>
<reference key="3">
    <citation type="journal article" date="2012" name="Cell. Microbiol.">
        <title>BmaC, a novel autotransporter of Brucella suis, is involved in bacterial adhesion to host cells.</title>
        <authorList>
            <person name="Posadas D.M."/>
            <person name="Ruiz-Ranwez V."/>
            <person name="Bonomi H.R."/>
            <person name="Martin F.A."/>
            <person name="Zorreguieta A."/>
        </authorList>
    </citation>
    <scope>FUNCTION</scope>
    <scope>FIBRONECTIN-BINDING</scope>
    <scope>SUBCELLULAR LOCATION</scope>
    <scope>DISRUPTION PHENOTYPE</scope>
    <source>
        <strain>1330</strain>
    </source>
</reference>
<dbReference type="EMBL" id="AE014292">
    <property type="protein sequence ID" value="AAN34307.1"/>
    <property type="molecule type" value="Genomic_DNA"/>
</dbReference>
<dbReference type="EMBL" id="CP002998">
    <property type="protein sequence ID" value="AEM20583.1"/>
    <property type="molecule type" value="Genomic_DNA"/>
</dbReference>
<dbReference type="RefSeq" id="WP_006191504.1">
    <property type="nucleotide sequence ID" value="NZ_KN046805.1"/>
</dbReference>
<dbReference type="SMR" id="A0A0H3GGE2"/>
<dbReference type="GeneID" id="45054131"/>
<dbReference type="KEGG" id="bms:BRA1148"/>
<dbReference type="KEGG" id="bsi:BS1330_II1139"/>
<dbReference type="PATRIC" id="fig|204722.22.peg.2740"/>
<dbReference type="HOGENOM" id="CLU_000353_0_0_5"/>
<dbReference type="Proteomes" id="UP000007104">
    <property type="component" value="Chromosome II"/>
</dbReference>
<dbReference type="GO" id="GO:0009279">
    <property type="term" value="C:cell outer membrane"/>
    <property type="evidence" value="ECO:0007669"/>
    <property type="project" value="UniProtKB-SubCell"/>
</dbReference>
<dbReference type="GO" id="GO:0009986">
    <property type="term" value="C:cell surface"/>
    <property type="evidence" value="ECO:0007669"/>
    <property type="project" value="UniProtKB-SubCell"/>
</dbReference>
<dbReference type="GO" id="GO:0007155">
    <property type="term" value="P:cell adhesion"/>
    <property type="evidence" value="ECO:0007669"/>
    <property type="project" value="UniProtKB-KW"/>
</dbReference>
<dbReference type="CDD" id="cd01344">
    <property type="entry name" value="PL2_Passenger_AT"/>
    <property type="match status" value="1"/>
</dbReference>
<dbReference type="Gene3D" id="2.160.20.20">
    <property type="match status" value="2"/>
</dbReference>
<dbReference type="Gene3D" id="2.40.128.130">
    <property type="entry name" value="Autotransporter beta-domain"/>
    <property type="match status" value="1"/>
</dbReference>
<dbReference type="InterPro" id="IPR043990">
    <property type="entry name" value="AC_1"/>
</dbReference>
<dbReference type="InterPro" id="IPR005546">
    <property type="entry name" value="Autotransporte_beta"/>
</dbReference>
<dbReference type="InterPro" id="IPR036709">
    <property type="entry name" value="Autotransporte_beta_dom_sf"/>
</dbReference>
<dbReference type="InterPro" id="IPR051551">
    <property type="entry name" value="Autotransporter_adhesion"/>
</dbReference>
<dbReference type="InterPro" id="IPR012332">
    <property type="entry name" value="Autotransporter_pectin_lyase_C"/>
</dbReference>
<dbReference type="InterPro" id="IPR013425">
    <property type="entry name" value="Autotrns_rpt"/>
</dbReference>
<dbReference type="InterPro" id="IPR006315">
    <property type="entry name" value="OM_autotransptr_brl_dom"/>
</dbReference>
<dbReference type="InterPro" id="IPR011050">
    <property type="entry name" value="Pectin_lyase_fold/virulence"/>
</dbReference>
<dbReference type="NCBIfam" id="TIGR01414">
    <property type="entry name" value="autotrans_barl"/>
    <property type="match status" value="1"/>
</dbReference>
<dbReference type="NCBIfam" id="TIGR02601">
    <property type="entry name" value="autotrns_rpt"/>
    <property type="match status" value="17"/>
</dbReference>
<dbReference type="PANTHER" id="PTHR35037">
    <property type="entry name" value="C-TERMINAL REGION OF AIDA-LIKE PROTEIN"/>
    <property type="match status" value="1"/>
</dbReference>
<dbReference type="PANTHER" id="PTHR35037:SF3">
    <property type="entry name" value="C-TERMINAL REGION OF AIDA-LIKE PROTEIN"/>
    <property type="match status" value="1"/>
</dbReference>
<dbReference type="Pfam" id="PF18883">
    <property type="entry name" value="AC_1"/>
    <property type="match status" value="1"/>
</dbReference>
<dbReference type="Pfam" id="PF12951">
    <property type="entry name" value="PATR"/>
    <property type="match status" value="18"/>
</dbReference>
<dbReference type="SMART" id="SM00869">
    <property type="entry name" value="Autotransporter"/>
    <property type="match status" value="1"/>
</dbReference>
<dbReference type="SUPFAM" id="SSF103515">
    <property type="entry name" value="Autotransporter"/>
    <property type="match status" value="1"/>
</dbReference>
<dbReference type="SUPFAM" id="SSF51126">
    <property type="entry name" value="Pectin lyase-like"/>
    <property type="match status" value="8"/>
</dbReference>
<dbReference type="PROSITE" id="PS51208">
    <property type="entry name" value="AUTOTRANSPORTER"/>
    <property type="match status" value="1"/>
</dbReference>
<accession>A0A0H3GGE2</accession>
<protein>
    <recommendedName>
        <fullName evidence="5">Adhesin BmaC autotransporter</fullName>
    </recommendedName>
    <alternativeName>
        <fullName evidence="4">Brucella monomeric autotransporter</fullName>
    </alternativeName>
</protein>
<organism>
    <name type="scientific">Brucella suis biovar 1 (strain 1330)</name>
    <dbReference type="NCBI Taxonomy" id="204722"/>
    <lineage>
        <taxon>Bacteria</taxon>
        <taxon>Pseudomonadati</taxon>
        <taxon>Pseudomonadota</taxon>
        <taxon>Alphaproteobacteria</taxon>
        <taxon>Hyphomicrobiales</taxon>
        <taxon>Brucellaceae</taxon>
        <taxon>Brucella/Ochrobactrum group</taxon>
        <taxon>Brucella</taxon>
    </lineage>
</organism>